<keyword id="KW-0143">Chaperone</keyword>
<keyword id="KW-0963">Cytoplasm</keyword>
<keyword id="KW-0533">Nickel</keyword>
<keyword id="KW-0996">Nickel insertion</keyword>
<feature type="chain" id="PRO_1000083884" description="Urease accessory protein UreE">
    <location>
        <begin position="1"/>
        <end position="213"/>
    </location>
</feature>
<feature type="region of interest" description="Disordered" evidence="2">
    <location>
        <begin position="170"/>
        <end position="213"/>
    </location>
</feature>
<feature type="compositionally biased region" description="Basic and acidic residues" evidence="2">
    <location>
        <begin position="182"/>
        <end position="200"/>
    </location>
</feature>
<name>UREE_BURTA</name>
<dbReference type="EMBL" id="CP000086">
    <property type="protein sequence ID" value="ABC38794.1"/>
    <property type="molecule type" value="Genomic_DNA"/>
</dbReference>
<dbReference type="RefSeq" id="WP_009889612.1">
    <property type="nucleotide sequence ID" value="NC_007651.1"/>
</dbReference>
<dbReference type="SMR" id="Q2SYF8"/>
<dbReference type="GeneID" id="45121236"/>
<dbReference type="KEGG" id="bte:BTH_I1495"/>
<dbReference type="HOGENOM" id="CLU_093757_0_0_4"/>
<dbReference type="Proteomes" id="UP000001930">
    <property type="component" value="Chromosome I"/>
</dbReference>
<dbReference type="GO" id="GO:0005737">
    <property type="term" value="C:cytoplasm"/>
    <property type="evidence" value="ECO:0007669"/>
    <property type="project" value="UniProtKB-SubCell"/>
</dbReference>
<dbReference type="GO" id="GO:0016151">
    <property type="term" value="F:nickel cation binding"/>
    <property type="evidence" value="ECO:0007669"/>
    <property type="project" value="UniProtKB-UniRule"/>
</dbReference>
<dbReference type="GO" id="GO:0051082">
    <property type="term" value="F:unfolded protein binding"/>
    <property type="evidence" value="ECO:0007669"/>
    <property type="project" value="UniProtKB-UniRule"/>
</dbReference>
<dbReference type="GO" id="GO:0006457">
    <property type="term" value="P:protein folding"/>
    <property type="evidence" value="ECO:0007669"/>
    <property type="project" value="InterPro"/>
</dbReference>
<dbReference type="GO" id="GO:0065003">
    <property type="term" value="P:protein-containing complex assembly"/>
    <property type="evidence" value="ECO:0007669"/>
    <property type="project" value="InterPro"/>
</dbReference>
<dbReference type="GO" id="GO:0019627">
    <property type="term" value="P:urea metabolic process"/>
    <property type="evidence" value="ECO:0007669"/>
    <property type="project" value="InterPro"/>
</dbReference>
<dbReference type="CDD" id="cd00571">
    <property type="entry name" value="UreE"/>
    <property type="match status" value="1"/>
</dbReference>
<dbReference type="Gene3D" id="2.60.260.20">
    <property type="entry name" value="Urease metallochaperone UreE, N-terminal domain"/>
    <property type="match status" value="1"/>
</dbReference>
<dbReference type="Gene3D" id="3.30.70.790">
    <property type="entry name" value="UreE, C-terminal domain"/>
    <property type="match status" value="1"/>
</dbReference>
<dbReference type="HAMAP" id="MF_00822">
    <property type="entry name" value="UreE"/>
    <property type="match status" value="1"/>
</dbReference>
<dbReference type="InterPro" id="IPR012406">
    <property type="entry name" value="UreE"/>
</dbReference>
<dbReference type="InterPro" id="IPR007864">
    <property type="entry name" value="UreE_C_dom"/>
</dbReference>
<dbReference type="InterPro" id="IPR004029">
    <property type="entry name" value="UreE_N"/>
</dbReference>
<dbReference type="InterPro" id="IPR036118">
    <property type="entry name" value="UreE_N_sf"/>
</dbReference>
<dbReference type="NCBIfam" id="NF009751">
    <property type="entry name" value="PRK13261.1-1"/>
    <property type="match status" value="1"/>
</dbReference>
<dbReference type="NCBIfam" id="NF009762">
    <property type="entry name" value="PRK13263.1"/>
    <property type="match status" value="1"/>
</dbReference>
<dbReference type="Pfam" id="PF05194">
    <property type="entry name" value="UreE_C"/>
    <property type="match status" value="1"/>
</dbReference>
<dbReference type="Pfam" id="PF02814">
    <property type="entry name" value="UreE_N"/>
    <property type="match status" value="1"/>
</dbReference>
<dbReference type="PIRSF" id="PIRSF036402">
    <property type="entry name" value="Ureas_acces_UreE"/>
    <property type="match status" value="1"/>
</dbReference>
<dbReference type="SMART" id="SM00988">
    <property type="entry name" value="UreE_N"/>
    <property type="match status" value="1"/>
</dbReference>
<dbReference type="SUPFAM" id="SSF69737">
    <property type="entry name" value="Urease metallochaperone UreE, C-terminal domain"/>
    <property type="match status" value="1"/>
</dbReference>
<dbReference type="SUPFAM" id="SSF69287">
    <property type="entry name" value="Urease metallochaperone UreE, N-terminal domain"/>
    <property type="match status" value="1"/>
</dbReference>
<organism>
    <name type="scientific">Burkholderia thailandensis (strain ATCC 700388 / DSM 13276 / CCUG 48851 / CIP 106301 / E264)</name>
    <dbReference type="NCBI Taxonomy" id="271848"/>
    <lineage>
        <taxon>Bacteria</taxon>
        <taxon>Pseudomonadati</taxon>
        <taxon>Pseudomonadota</taxon>
        <taxon>Betaproteobacteria</taxon>
        <taxon>Burkholderiales</taxon>
        <taxon>Burkholderiaceae</taxon>
        <taxon>Burkholderia</taxon>
        <taxon>pseudomallei group</taxon>
    </lineage>
</organism>
<protein>
    <recommendedName>
        <fullName evidence="1">Urease accessory protein UreE</fullName>
    </recommendedName>
</protein>
<comment type="function">
    <text evidence="1">Involved in urease metallocenter assembly. Binds nickel. Probably functions as a nickel donor during metallocenter assembly.</text>
</comment>
<comment type="subcellular location">
    <subcellularLocation>
        <location evidence="1">Cytoplasm</location>
    </subcellularLocation>
</comment>
<comment type="similarity">
    <text evidence="1">Belongs to the UreE family.</text>
</comment>
<reference key="1">
    <citation type="journal article" date="2005" name="BMC Genomics">
        <title>Bacterial genome adaptation to niches: divergence of the potential virulence genes in three Burkholderia species of different survival strategies.</title>
        <authorList>
            <person name="Kim H.S."/>
            <person name="Schell M.A."/>
            <person name="Yu Y."/>
            <person name="Ulrich R.L."/>
            <person name="Sarria S.H."/>
            <person name="Nierman W.C."/>
            <person name="DeShazer D."/>
        </authorList>
    </citation>
    <scope>NUCLEOTIDE SEQUENCE [LARGE SCALE GENOMIC DNA]</scope>
    <source>
        <strain>ATCC 700388 / DSM 13276 / CCUG 48851 / CIP 106301 / E264</strain>
    </source>
</reference>
<accession>Q2SYF8</accession>
<evidence type="ECO:0000255" key="1">
    <source>
        <dbReference type="HAMAP-Rule" id="MF_00822"/>
    </source>
</evidence>
<evidence type="ECO:0000256" key="2">
    <source>
        <dbReference type="SAM" id="MobiDB-lite"/>
    </source>
</evidence>
<proteinExistence type="inferred from homology"/>
<sequence>MRTIDKRIAPNVKLATALVARAPTLTLAYDARCKSRLAATLDTGEEVALVLPRGTVLRDGDVLVADDGALVRVAAAHEAVLLVRAPDALTLTRAAYHLGNRHTPVEVGAGCLKLEYDPVLADMLTRLGATIERANAPFQPEAGAYGGGHRHGHDATFAEDYALAQQVFDEHHGRSHSHSHSHSHDHDHDHDHDHDHDHQHGPSCSHGHGHGHR</sequence>
<gene>
    <name evidence="1" type="primary">ureE</name>
    <name type="ordered locus">BTH_I1495</name>
</gene>